<protein>
    <recommendedName>
        <fullName evidence="3">Type I restriction enzyme MjaVIII specificity subunit</fullName>
        <shortName>S protein</shortName>
    </recommendedName>
    <alternativeName>
        <fullName evidence="2">Type I specificity subunit S.MjaVIII</fullName>
        <shortName evidence="2">S.MjaVIII</shortName>
    </alternativeName>
</protein>
<sequence>MVIIMQFYKEENFKEMHGLRVPEDWEVVRIGDFIKYIKGKKPAVMVDEELEGYYPYLSTEYLRDGIASKFVKITNKEIIVNENDILLLWDGSNAGEIFLGKKGILSSTMVKLEQKNKIMDDLYLFYSLKLKESFLKSQTKGTGIPHVDKKIFENIKIPLPPLEEQKQIAKILSDFDNLIGTINKQIEVLNKAKKGMMKKLFTKGVFEHKSFKKSEIGEIPEDWEVVKLKEVVDIQSGKYFKYSEFCENGVKCLKIDNVGFGKIFWETVSFLPEDYLNKYPQLVLKSGDIVLALNRPIIGGKIKIGILKDIDEPAILYQRVGRFIFKSEKIDKQFLFYLLMSEYFKKELSKLLIGTDQPYIRTPVLLNIKIPLPHLEEQKAMAERLKSIDNLIEIKRKEKEQIEKAKKKIMNLLLTGKIRVKNLNF</sequence>
<gene>
    <name type="ordered locus">MJ1218</name>
</gene>
<organism>
    <name type="scientific">Methanocaldococcus jannaschii (strain ATCC 43067 / DSM 2661 / JAL-1 / JCM 10045 / NBRC 100440)</name>
    <name type="common">Methanococcus jannaschii</name>
    <dbReference type="NCBI Taxonomy" id="243232"/>
    <lineage>
        <taxon>Archaea</taxon>
        <taxon>Methanobacteriati</taxon>
        <taxon>Methanobacteriota</taxon>
        <taxon>Methanomada group</taxon>
        <taxon>Methanococci</taxon>
        <taxon>Methanococcales</taxon>
        <taxon>Methanocaldococcaceae</taxon>
        <taxon>Methanocaldococcus</taxon>
    </lineage>
</organism>
<dbReference type="EMBL" id="L77117">
    <property type="protein sequence ID" value="AAB99219.1"/>
    <property type="molecule type" value="Genomic_DNA"/>
</dbReference>
<dbReference type="PIR" id="A64452">
    <property type="entry name" value="A64452"/>
</dbReference>
<dbReference type="SMR" id="Q58615"/>
<dbReference type="STRING" id="243232.MJ_1218"/>
<dbReference type="REBASE" id="3904">
    <property type="entry name" value="S.MjaVIII"/>
</dbReference>
<dbReference type="PaxDb" id="243232-MJ_1218"/>
<dbReference type="EnsemblBacteria" id="AAB99219">
    <property type="protein sequence ID" value="AAB99219"/>
    <property type="gene ID" value="MJ_1218"/>
</dbReference>
<dbReference type="KEGG" id="mja:MJ_1218"/>
<dbReference type="eggNOG" id="arCOG02626">
    <property type="taxonomic scope" value="Archaea"/>
</dbReference>
<dbReference type="HOGENOM" id="CLU_021095_0_1_2"/>
<dbReference type="InParanoid" id="Q58615"/>
<dbReference type="PhylomeDB" id="Q58615"/>
<dbReference type="Proteomes" id="UP000000805">
    <property type="component" value="Chromosome"/>
</dbReference>
<dbReference type="GO" id="GO:0003677">
    <property type="term" value="F:DNA binding"/>
    <property type="evidence" value="ECO:0007669"/>
    <property type="project" value="UniProtKB-KW"/>
</dbReference>
<dbReference type="GO" id="GO:0009307">
    <property type="term" value="P:DNA restriction-modification system"/>
    <property type="evidence" value="ECO:0007669"/>
    <property type="project" value="UniProtKB-KW"/>
</dbReference>
<dbReference type="CDD" id="cd17263">
    <property type="entry name" value="RMtype1_S_AbaB8300I-TRD1-CR1_like"/>
    <property type="match status" value="1"/>
</dbReference>
<dbReference type="CDD" id="cd17259">
    <property type="entry name" value="RMtype1_S_StySKI-TRD2-CR2_like"/>
    <property type="match status" value="1"/>
</dbReference>
<dbReference type="Gene3D" id="1.10.287.1120">
    <property type="entry name" value="Bipartite methylase S protein"/>
    <property type="match status" value="1"/>
</dbReference>
<dbReference type="Gene3D" id="3.90.220.20">
    <property type="entry name" value="DNA methylase specificity domains"/>
    <property type="match status" value="2"/>
</dbReference>
<dbReference type="InterPro" id="IPR000055">
    <property type="entry name" value="Restrct_endonuc_typeI_TRD"/>
</dbReference>
<dbReference type="InterPro" id="IPR044946">
    <property type="entry name" value="Restrct_endonuc_typeI_TRD_sf"/>
</dbReference>
<dbReference type="InterPro" id="IPR052021">
    <property type="entry name" value="Type-I_RS_S_subunit"/>
</dbReference>
<dbReference type="PANTHER" id="PTHR30408:SF12">
    <property type="entry name" value="TYPE I RESTRICTION ENZYME MJAVIII SPECIFICITY SUBUNIT"/>
    <property type="match status" value="1"/>
</dbReference>
<dbReference type="PANTHER" id="PTHR30408">
    <property type="entry name" value="TYPE-1 RESTRICTION ENZYME ECOKI SPECIFICITY PROTEIN"/>
    <property type="match status" value="1"/>
</dbReference>
<dbReference type="Pfam" id="PF01420">
    <property type="entry name" value="Methylase_S"/>
    <property type="match status" value="2"/>
</dbReference>
<dbReference type="SUPFAM" id="SSF116734">
    <property type="entry name" value="DNA methylase specificity domain"/>
    <property type="match status" value="2"/>
</dbReference>
<reference key="1">
    <citation type="journal article" date="1996" name="Science">
        <title>Complete genome sequence of the methanogenic archaeon, Methanococcus jannaschii.</title>
        <authorList>
            <person name="Bult C.J."/>
            <person name="White O."/>
            <person name="Olsen G.J."/>
            <person name="Zhou L."/>
            <person name="Fleischmann R.D."/>
            <person name="Sutton G.G."/>
            <person name="Blake J.A."/>
            <person name="FitzGerald L.M."/>
            <person name="Clayton R.A."/>
            <person name="Gocayne J.D."/>
            <person name="Kerlavage A.R."/>
            <person name="Dougherty B.A."/>
            <person name="Tomb J.-F."/>
            <person name="Adams M.D."/>
            <person name="Reich C.I."/>
            <person name="Overbeek R."/>
            <person name="Kirkness E.F."/>
            <person name="Weinstock K.G."/>
            <person name="Merrick J.M."/>
            <person name="Glodek A."/>
            <person name="Scott J.L."/>
            <person name="Geoghagen N.S.M."/>
            <person name="Weidman J.F."/>
            <person name="Fuhrmann J.L."/>
            <person name="Nguyen D."/>
            <person name="Utterback T.R."/>
            <person name="Kelley J.M."/>
            <person name="Peterson J.D."/>
            <person name="Sadow P.W."/>
            <person name="Hanna M.C."/>
            <person name="Cotton M.D."/>
            <person name="Roberts K.M."/>
            <person name="Hurst M.A."/>
            <person name="Kaine B.P."/>
            <person name="Borodovsky M."/>
            <person name="Klenk H.-P."/>
            <person name="Fraser C.M."/>
            <person name="Smith H.O."/>
            <person name="Woese C.R."/>
            <person name="Venter J.C."/>
        </authorList>
    </citation>
    <scope>NUCLEOTIDE SEQUENCE [LARGE SCALE GENOMIC DNA]</scope>
    <source>
        <strain>ATCC 43067 / DSM 2661 / JAL-1 / JCM 10045 / NBRC 100440</strain>
    </source>
</reference>
<reference key="2">
    <citation type="journal article" date="2003" name="Nucleic Acids Res.">
        <title>A nomenclature for restriction enzymes, DNA methyltransferases, homing endonucleases and their genes.</title>
        <authorList>
            <person name="Roberts R.J."/>
            <person name="Belfort M."/>
            <person name="Bestor T."/>
            <person name="Bhagwat A.S."/>
            <person name="Bickle T.A."/>
            <person name="Bitinaite J."/>
            <person name="Blumenthal R.M."/>
            <person name="Degtyarev S.K."/>
            <person name="Dryden D.T."/>
            <person name="Dybvig K."/>
            <person name="Firman K."/>
            <person name="Gromova E.S."/>
            <person name="Gumport R.I."/>
            <person name="Halford S.E."/>
            <person name="Hattman S."/>
            <person name="Heitman J."/>
            <person name="Hornby D.P."/>
            <person name="Janulaitis A."/>
            <person name="Jeltsch A."/>
            <person name="Josephsen J."/>
            <person name="Kiss A."/>
            <person name="Klaenhammer T.R."/>
            <person name="Kobayashi I."/>
            <person name="Kong H."/>
            <person name="Krueger D.H."/>
            <person name="Lacks S."/>
            <person name="Marinus M.G."/>
            <person name="Miyahara M."/>
            <person name="Morgan R.D."/>
            <person name="Murray N.E."/>
            <person name="Nagaraja V."/>
            <person name="Piekarowicz A."/>
            <person name="Pingoud A."/>
            <person name="Raleigh E."/>
            <person name="Rao D.N."/>
            <person name="Reich N."/>
            <person name="Repin V.E."/>
            <person name="Selker E.U."/>
            <person name="Shaw P.C."/>
            <person name="Stein D.C."/>
            <person name="Stoddard B.L."/>
            <person name="Szybalski W."/>
            <person name="Trautner T.A."/>
            <person name="Van Etten J.L."/>
            <person name="Vitor J.M."/>
            <person name="Wilson G.G."/>
            <person name="Xu S.Y."/>
        </authorList>
    </citation>
    <scope>NOMENCLATURE</scope>
</reference>
<feature type="chain" id="PRO_0000107220" description="Type I restriction enzyme MjaVIII specificity subunit">
    <location>
        <begin position="1"/>
        <end position="425"/>
    </location>
</feature>
<accession>Q58615</accession>
<comment type="function">
    <text evidence="1 2">The specificity (S) subunit of a type I restriction enzyme; this subunit dictates DNA sequence specificity. The M and S subunits together form a methyltransferase (MTase) that methylates A-2 on the top and A-3 on the bottom strand of the sequence 5'-GAYN(5)GTAA-3'. In the presence of the R subunit the complex can also act as an endonuclease, binding to the same target sequence but cutting the DNA some distance from this site. Whether the DNA is cut or modified depends on the methylation state of the target sequence. When the target site is unmodified, the DNA is cut. When the target site is hemimethylated, the complex acts as a maintenance MTase modifying the DNA so that both strands become methylated. After locating a non-methylated recognition site, the enzyme complex serves as a molecular motor that translocates DNA in an ATP-dependent manner until a collision occurs that triggers cleavage.</text>
</comment>
<comment type="subunit">
    <text evidence="1">The type I restriction/modification system is composed of three polypeptides R, M and S.</text>
</comment>
<comment type="domain">
    <text evidence="1">Contains two DNA recognition domains, each specifying recognition of one of the two defined components of the target sequence.</text>
</comment>
<comment type="miscellaneous">
    <text evidence="1">Type I restriction and modification enzymes are complex, multifunctional systems which require ATP, S-adenosyl methionine and Mg(2+) as cofactors and, in addition to their endonucleolytic and methylase activities, are potent DNA-dependent ATPases.</text>
</comment>
<comment type="similarity">
    <text evidence="3">Belongs to the type-I restriction system S methylase family.</text>
</comment>
<keyword id="KW-0238">DNA-binding</keyword>
<keyword id="KW-1185">Reference proteome</keyword>
<keyword id="KW-0680">Restriction system</keyword>
<name>T1S2_METJA</name>
<proteinExistence type="inferred from homology"/>
<evidence type="ECO:0000250" key="1">
    <source>
        <dbReference type="UniProtKB" id="P05719"/>
    </source>
</evidence>
<evidence type="ECO:0000303" key="2">
    <source>
    </source>
</evidence>
<evidence type="ECO:0000305" key="3"/>